<proteinExistence type="evidence at protein level"/>
<accession>P14474</accession>
<keyword id="KW-1064">Adaptive immunity</keyword>
<keyword id="KW-0094">Blood coagulation</keyword>
<keyword id="KW-0175">Coiled coil</keyword>
<keyword id="KW-0903">Direct protein sequencing</keyword>
<keyword id="KW-1015">Disulfide bond</keyword>
<keyword id="KW-0356">Hemostasis</keyword>
<keyword id="KW-0391">Immunity</keyword>
<keyword id="KW-0399">Innate immunity</keyword>
<keyword id="KW-0873">Pyrrolidone carboxylic acid</keyword>
<keyword id="KW-1185">Reference proteome</keyword>
<keyword id="KW-0964">Secreted</keyword>
<comment type="function">
    <text evidence="1">Cleaved by the protease thrombin to yield monomers which, together with fibrinogen alpha (FGA) and fibrinogen gamma (FGG), polymerize to form an insoluble fibrin matrix. Fibrin has a major function in hemostasis as one of the primary components of blood clots. In addition, functions during the early stages of wound repair to stabilize the lesion and guide cell migration during re-epithelialization. Was originally thought to be essential for platelet aggregation, based on in vitro studies using anticoagulated blood. However subsequent studies have shown that it is not absolutely required for thrombus formation in vivo. Enhances expression of SELP in activated platelets. Maternal fibrinogen is essential for successful pregnancy. Fibrin deposition is also associated with infection, where it protects against IFNG-mediated hemorrhage. May also facilitate the antibacterial immune response via both innate and T-cell mediated pathways.</text>
</comment>
<comment type="subunit">
    <text evidence="2">Heterohexamer; disulfide linked. Contains 2 sets of 3 non-identical chains (alpha, beta and gamma). The 2 heterotrimers are in head to head conformation with the N-termini in a small central domain (By similarity).</text>
</comment>
<comment type="subcellular location">
    <subcellularLocation>
        <location>Secreted</location>
    </subcellularLocation>
</comment>
<comment type="domain">
    <text evidence="2">A long coiled coil structure formed by 3 polypeptide chains connects the central nodule to the C-terminal domains (distal nodules). The long C-terminal ends of the alpha chains fold back, contributing a fourth strand to the coiled coil structure.</text>
</comment>
<comment type="PTM">
    <text>Conversion of fibrinogen to fibrin is triggered by thrombin, which cleaves fibrinopeptides A and B from alpha and beta chains, and thus exposes the N-terminal polymerization sites responsible for the formation of the soft clot.</text>
</comment>
<name>FIBB_MANLE</name>
<organism>
    <name type="scientific">Mandrillus leucophaeus</name>
    <name type="common">Drill</name>
    <name type="synonym">Papio leucophaeus</name>
    <dbReference type="NCBI Taxonomy" id="9568"/>
    <lineage>
        <taxon>Eukaryota</taxon>
        <taxon>Metazoa</taxon>
        <taxon>Chordata</taxon>
        <taxon>Craniata</taxon>
        <taxon>Vertebrata</taxon>
        <taxon>Euteleostomi</taxon>
        <taxon>Mammalia</taxon>
        <taxon>Eutheria</taxon>
        <taxon>Euarchontoglires</taxon>
        <taxon>Primates</taxon>
        <taxon>Haplorrhini</taxon>
        <taxon>Catarrhini</taxon>
        <taxon>Cercopithecidae</taxon>
        <taxon>Cercopithecinae</taxon>
        <taxon>Mandrillus</taxon>
    </lineage>
</organism>
<feature type="peptide" id="PRO_0000009076" description="Fibrinopeptide B">
    <location>
        <begin position="1"/>
        <end position="14"/>
    </location>
</feature>
<feature type="modified residue" description="Pyrrolidone carboxylic acid" evidence="3">
    <location>
        <position position="1"/>
    </location>
</feature>
<feature type="non-terminal residue">
    <location>
        <position position="14"/>
    </location>
</feature>
<reference key="1">
    <citation type="journal article" date="1969" name="Biochim. Biophys. Acta">
        <title>Characterization of fibrinopeptides A and B from a drill (Mandrillus leucophaeus).</title>
        <authorList>
            <person name="Doolittle R.F."/>
            <person name="Glascow C."/>
            <person name="Mross G.A."/>
        </authorList>
    </citation>
    <scope>PROTEIN SEQUENCE</scope>
    <scope>PYROGLUTAMATE FORMATION AT GLN-1</scope>
</reference>
<protein>
    <recommendedName>
        <fullName>Fibrinogen beta chain</fullName>
    </recommendedName>
    <component>
        <recommendedName>
            <fullName>Fibrinopeptide B</fullName>
        </recommendedName>
    </component>
</protein>
<evidence type="ECO:0000250" key="1">
    <source>
        <dbReference type="UniProtKB" id="E9PV24"/>
    </source>
</evidence>
<evidence type="ECO:0000250" key="2">
    <source>
        <dbReference type="UniProtKB" id="P02675"/>
    </source>
</evidence>
<evidence type="ECO:0000269" key="3">
    <source>
    </source>
</evidence>
<gene>
    <name type="primary">FGB</name>
</gene>
<dbReference type="Proteomes" id="UP000233140">
    <property type="component" value="Unassembled WGS sequence"/>
</dbReference>
<dbReference type="GO" id="GO:0005576">
    <property type="term" value="C:extracellular region"/>
    <property type="evidence" value="ECO:0007669"/>
    <property type="project" value="UniProtKB-SubCell"/>
</dbReference>
<dbReference type="GO" id="GO:0002250">
    <property type="term" value="P:adaptive immune response"/>
    <property type="evidence" value="ECO:0007669"/>
    <property type="project" value="UniProtKB-KW"/>
</dbReference>
<dbReference type="GO" id="GO:0007596">
    <property type="term" value="P:blood coagulation"/>
    <property type="evidence" value="ECO:0007669"/>
    <property type="project" value="UniProtKB-KW"/>
</dbReference>
<dbReference type="GO" id="GO:0045087">
    <property type="term" value="P:innate immune response"/>
    <property type="evidence" value="ECO:0007669"/>
    <property type="project" value="UniProtKB-KW"/>
</dbReference>
<sequence>QGVBGBEEGLFGGR</sequence>